<reference key="1">
    <citation type="submission" date="1997-03" db="EMBL/GenBank/DDBJ databases">
        <title>Glutathione peroxidase cDNA from Arabidopsis.</title>
        <authorList>
            <person name="Turano F.J."/>
            <person name="Caldwell C.R."/>
            <person name="McMahon M."/>
        </authorList>
    </citation>
    <scope>NUCLEOTIDE SEQUENCE [MRNA]</scope>
    <source>
        <strain>cv. Columbia</strain>
    </source>
</reference>
<reference key="2">
    <citation type="journal article" date="1999" name="Nature">
        <title>Sequence and analysis of chromosome 2 of the plant Arabidopsis thaliana.</title>
        <authorList>
            <person name="Lin X."/>
            <person name="Kaul S."/>
            <person name="Rounsley S.D."/>
            <person name="Shea T.P."/>
            <person name="Benito M.-I."/>
            <person name="Town C.D."/>
            <person name="Fujii C.Y."/>
            <person name="Mason T.M."/>
            <person name="Bowman C.L."/>
            <person name="Barnstead M.E."/>
            <person name="Feldblyum T.V."/>
            <person name="Buell C.R."/>
            <person name="Ketchum K.A."/>
            <person name="Lee J.J."/>
            <person name="Ronning C.M."/>
            <person name="Koo H.L."/>
            <person name="Moffat K.S."/>
            <person name="Cronin L.A."/>
            <person name="Shen M."/>
            <person name="Pai G."/>
            <person name="Van Aken S."/>
            <person name="Umayam L."/>
            <person name="Tallon L.J."/>
            <person name="Gill J.E."/>
            <person name="Adams M.D."/>
            <person name="Carrera A.J."/>
            <person name="Creasy T.H."/>
            <person name="Goodman H.M."/>
            <person name="Somerville C.R."/>
            <person name="Copenhaver G.P."/>
            <person name="Preuss D."/>
            <person name="Nierman W.C."/>
            <person name="White O."/>
            <person name="Eisen J.A."/>
            <person name="Salzberg S.L."/>
            <person name="Fraser C.M."/>
            <person name="Venter J.C."/>
        </authorList>
    </citation>
    <scope>NUCLEOTIDE SEQUENCE [LARGE SCALE GENOMIC DNA]</scope>
    <source>
        <strain>cv. Columbia</strain>
    </source>
</reference>
<reference key="3">
    <citation type="journal article" date="2017" name="Plant J.">
        <title>Araport11: a complete reannotation of the Arabidopsis thaliana reference genome.</title>
        <authorList>
            <person name="Cheng C.Y."/>
            <person name="Krishnakumar V."/>
            <person name="Chan A.P."/>
            <person name="Thibaud-Nissen F."/>
            <person name="Schobel S."/>
            <person name="Town C.D."/>
        </authorList>
    </citation>
    <scope>GENOME REANNOTATION</scope>
    <source>
        <strain>cv. Columbia</strain>
    </source>
</reference>
<reference key="4">
    <citation type="journal article" date="2003" name="Science">
        <title>Empirical analysis of transcriptional activity in the Arabidopsis genome.</title>
        <authorList>
            <person name="Yamada K."/>
            <person name="Lim J."/>
            <person name="Dale J.M."/>
            <person name="Chen H."/>
            <person name="Shinn P."/>
            <person name="Palm C.J."/>
            <person name="Southwick A.M."/>
            <person name="Wu H.C."/>
            <person name="Kim C.J."/>
            <person name="Nguyen M."/>
            <person name="Pham P.K."/>
            <person name="Cheuk R.F."/>
            <person name="Karlin-Newmann G."/>
            <person name="Liu S.X."/>
            <person name="Lam B."/>
            <person name="Sakano H."/>
            <person name="Wu T."/>
            <person name="Yu G."/>
            <person name="Miranda M."/>
            <person name="Quach H.L."/>
            <person name="Tripp M."/>
            <person name="Chang C.H."/>
            <person name="Lee J.M."/>
            <person name="Toriumi M.J."/>
            <person name="Chan M.M."/>
            <person name="Tang C.C."/>
            <person name="Onodera C.S."/>
            <person name="Deng J.M."/>
            <person name="Akiyama K."/>
            <person name="Ansari Y."/>
            <person name="Arakawa T."/>
            <person name="Banh J."/>
            <person name="Banno F."/>
            <person name="Bowser L."/>
            <person name="Brooks S.Y."/>
            <person name="Carninci P."/>
            <person name="Chao Q."/>
            <person name="Choy N."/>
            <person name="Enju A."/>
            <person name="Goldsmith A.D."/>
            <person name="Gurjal M."/>
            <person name="Hansen N.F."/>
            <person name="Hayashizaki Y."/>
            <person name="Johnson-Hopson C."/>
            <person name="Hsuan V.W."/>
            <person name="Iida K."/>
            <person name="Karnes M."/>
            <person name="Khan S."/>
            <person name="Koesema E."/>
            <person name="Ishida J."/>
            <person name="Jiang P.X."/>
            <person name="Jones T."/>
            <person name="Kawai J."/>
            <person name="Kamiya A."/>
            <person name="Meyers C."/>
            <person name="Nakajima M."/>
            <person name="Narusaka M."/>
            <person name="Seki M."/>
            <person name="Sakurai T."/>
            <person name="Satou M."/>
            <person name="Tamse R."/>
            <person name="Vaysberg M."/>
            <person name="Wallender E.K."/>
            <person name="Wong C."/>
            <person name="Yamamura Y."/>
            <person name="Yuan S."/>
            <person name="Shinozaki K."/>
            <person name="Davis R.W."/>
            <person name="Theologis A."/>
            <person name="Ecker J.R."/>
        </authorList>
    </citation>
    <scope>NUCLEOTIDE SEQUENCE [LARGE SCALE MRNA]</scope>
    <source>
        <strain>cv. Columbia</strain>
    </source>
</reference>
<reference key="5">
    <citation type="submission" date="2002-03" db="EMBL/GenBank/DDBJ databases">
        <title>Full-length cDNA from Arabidopsis thaliana.</title>
        <authorList>
            <person name="Brover V.V."/>
            <person name="Troukhan M.E."/>
            <person name="Alexandrov N.A."/>
            <person name="Lu Y.-P."/>
            <person name="Flavell R.B."/>
            <person name="Feldmann K.A."/>
        </authorList>
    </citation>
    <scope>NUCLEOTIDE SEQUENCE [LARGE SCALE MRNA]</scope>
</reference>
<reference key="6">
    <citation type="journal article" date="2003" name="Plant J.">
        <title>Glutathione peroxidase genes in Arabidopsis are ubiquitous and regulated by abiotic stresses through diverse signaling pathways.</title>
        <authorList>
            <person name="Rodriguez Milla M.A."/>
            <person name="Maurer A."/>
            <person name="Rodriguez Huete A."/>
            <person name="Gustafson J.P."/>
        </authorList>
    </citation>
    <scope>GENE FAMILY</scope>
    <scope>NOMENCLATURE</scope>
    <scope>TISSUE SPECIFICITY</scope>
    <scope>INDUCTION</scope>
</reference>
<reference key="7">
    <citation type="journal article" date="2010" name="J. Cell Sci.">
        <title>The Arabidopsis DJ-1a protein confers stress protection through cytosolic SOD activation.</title>
        <authorList>
            <person name="Xu X.M."/>
            <person name="Lin H."/>
            <person name="Maple J."/>
            <person name="Bjoerkblom B."/>
            <person name="Alves G."/>
            <person name="Larsen J.P."/>
            <person name="Moeller S.G."/>
        </authorList>
    </citation>
    <scope>SUBCELLULAR LOCATION</scope>
    <scope>INTERACTION WITH DJ1A</scope>
</reference>
<evidence type="ECO:0000250" key="1"/>
<evidence type="ECO:0000269" key="2">
    <source>
    </source>
</evidence>
<evidence type="ECO:0000269" key="3">
    <source>
    </source>
</evidence>
<evidence type="ECO:0000305" key="4"/>
<accession>O04922</accession>
<protein>
    <recommendedName>
        <fullName>Probable glutathione peroxidase 2</fullName>
        <ecNumber>1.11.1.9</ecNumber>
    </recommendedName>
</protein>
<organism>
    <name type="scientific">Arabidopsis thaliana</name>
    <name type="common">Mouse-ear cress</name>
    <dbReference type="NCBI Taxonomy" id="3702"/>
    <lineage>
        <taxon>Eukaryota</taxon>
        <taxon>Viridiplantae</taxon>
        <taxon>Streptophyta</taxon>
        <taxon>Embryophyta</taxon>
        <taxon>Tracheophyta</taxon>
        <taxon>Spermatophyta</taxon>
        <taxon>Magnoliopsida</taxon>
        <taxon>eudicotyledons</taxon>
        <taxon>Gunneridae</taxon>
        <taxon>Pentapetalae</taxon>
        <taxon>rosids</taxon>
        <taxon>malvids</taxon>
        <taxon>Brassicales</taxon>
        <taxon>Brassicaceae</taxon>
        <taxon>Camelineae</taxon>
        <taxon>Arabidopsis</taxon>
    </lineage>
</organism>
<dbReference type="EC" id="1.11.1.9"/>
<dbReference type="EMBL" id="U94495">
    <property type="protein sequence ID" value="AAB52725.1"/>
    <property type="molecule type" value="mRNA"/>
</dbReference>
<dbReference type="EMBL" id="AC007071">
    <property type="protein sequence ID" value="AAD24836.1"/>
    <property type="molecule type" value="Genomic_DNA"/>
</dbReference>
<dbReference type="EMBL" id="CP002685">
    <property type="protein sequence ID" value="AEC08562.1"/>
    <property type="molecule type" value="Genomic_DNA"/>
</dbReference>
<dbReference type="EMBL" id="AY058187">
    <property type="protein sequence ID" value="AAL25600.1"/>
    <property type="molecule type" value="mRNA"/>
</dbReference>
<dbReference type="EMBL" id="AY044330">
    <property type="protein sequence ID" value="AAK73271.1"/>
    <property type="molecule type" value="mRNA"/>
</dbReference>
<dbReference type="EMBL" id="AY098982">
    <property type="protein sequence ID" value="AAM19992.1"/>
    <property type="molecule type" value="mRNA"/>
</dbReference>
<dbReference type="EMBL" id="AY086518">
    <property type="protein sequence ID" value="AAM63517.1"/>
    <property type="molecule type" value="mRNA"/>
</dbReference>
<dbReference type="PIR" id="D84722">
    <property type="entry name" value="D84722"/>
</dbReference>
<dbReference type="RefSeq" id="NP_180715.1">
    <property type="nucleotide sequence ID" value="NM_128714.4"/>
</dbReference>
<dbReference type="SMR" id="O04922"/>
<dbReference type="BioGRID" id="3062">
    <property type="interactions" value="3"/>
</dbReference>
<dbReference type="FunCoup" id="O04922">
    <property type="interactions" value="2254"/>
</dbReference>
<dbReference type="IntAct" id="O04922">
    <property type="interactions" value="3"/>
</dbReference>
<dbReference type="MINT" id="O04922"/>
<dbReference type="STRING" id="3702.O04922"/>
<dbReference type="PeroxiBase" id="2500">
    <property type="entry name" value="AtGPx02"/>
</dbReference>
<dbReference type="iPTMnet" id="O04922"/>
<dbReference type="PaxDb" id="3702-AT2G31570.1"/>
<dbReference type="ProteomicsDB" id="220705"/>
<dbReference type="EnsemblPlants" id="AT2G31570.1">
    <property type="protein sequence ID" value="AT2G31570.1"/>
    <property type="gene ID" value="AT2G31570"/>
</dbReference>
<dbReference type="GeneID" id="817715"/>
<dbReference type="Gramene" id="AT2G31570.1">
    <property type="protein sequence ID" value="AT2G31570.1"/>
    <property type="gene ID" value="AT2G31570"/>
</dbReference>
<dbReference type="KEGG" id="ath:AT2G31570"/>
<dbReference type="Araport" id="AT2G31570"/>
<dbReference type="TAIR" id="AT2G31570">
    <property type="gene designation" value="GPX2"/>
</dbReference>
<dbReference type="eggNOG" id="KOG1651">
    <property type="taxonomic scope" value="Eukaryota"/>
</dbReference>
<dbReference type="HOGENOM" id="CLU_029507_0_1_1"/>
<dbReference type="InParanoid" id="O04922"/>
<dbReference type="OMA" id="QCGLTKQ"/>
<dbReference type="OrthoDB" id="446890at2759"/>
<dbReference type="PhylomeDB" id="O04922"/>
<dbReference type="BioCyc" id="ARA:AT2G31570-MONOMER"/>
<dbReference type="PRO" id="PR:O04922"/>
<dbReference type="Proteomes" id="UP000006548">
    <property type="component" value="Chromosome 2"/>
</dbReference>
<dbReference type="ExpressionAtlas" id="O04922">
    <property type="expression patterns" value="baseline and differential"/>
</dbReference>
<dbReference type="GO" id="GO:0005829">
    <property type="term" value="C:cytosol"/>
    <property type="evidence" value="ECO:0000314"/>
    <property type="project" value="UniProtKB"/>
</dbReference>
<dbReference type="GO" id="GO:0005634">
    <property type="term" value="C:nucleus"/>
    <property type="evidence" value="ECO:0000314"/>
    <property type="project" value="UniProtKB"/>
</dbReference>
<dbReference type="GO" id="GO:0005777">
    <property type="term" value="C:peroxisome"/>
    <property type="evidence" value="ECO:0007005"/>
    <property type="project" value="TAIR"/>
</dbReference>
<dbReference type="GO" id="GO:0005886">
    <property type="term" value="C:plasma membrane"/>
    <property type="evidence" value="ECO:0007005"/>
    <property type="project" value="TAIR"/>
</dbReference>
<dbReference type="GO" id="GO:0004602">
    <property type="term" value="F:glutathione peroxidase activity"/>
    <property type="evidence" value="ECO:0007669"/>
    <property type="project" value="UniProtKB-EC"/>
</dbReference>
<dbReference type="GO" id="GO:1901149">
    <property type="term" value="F:salicylic acid binding"/>
    <property type="evidence" value="ECO:0007005"/>
    <property type="project" value="TAIR"/>
</dbReference>
<dbReference type="GO" id="GO:0006979">
    <property type="term" value="P:response to oxidative stress"/>
    <property type="evidence" value="ECO:0007669"/>
    <property type="project" value="InterPro"/>
</dbReference>
<dbReference type="CDD" id="cd00340">
    <property type="entry name" value="GSH_Peroxidase"/>
    <property type="match status" value="1"/>
</dbReference>
<dbReference type="FunFam" id="3.40.30.10:FF:000025">
    <property type="entry name" value="Glutathione peroxidase"/>
    <property type="match status" value="1"/>
</dbReference>
<dbReference type="Gene3D" id="3.40.30.10">
    <property type="entry name" value="Glutaredoxin"/>
    <property type="match status" value="1"/>
</dbReference>
<dbReference type="InterPro" id="IPR000889">
    <property type="entry name" value="Glutathione_peroxidase"/>
</dbReference>
<dbReference type="InterPro" id="IPR029759">
    <property type="entry name" value="GPX_AS"/>
</dbReference>
<dbReference type="InterPro" id="IPR029760">
    <property type="entry name" value="GPX_CS"/>
</dbReference>
<dbReference type="InterPro" id="IPR036249">
    <property type="entry name" value="Thioredoxin-like_sf"/>
</dbReference>
<dbReference type="InterPro" id="IPR013766">
    <property type="entry name" value="Thioredoxin_domain"/>
</dbReference>
<dbReference type="PANTHER" id="PTHR11592">
    <property type="entry name" value="GLUTATHIONE PEROXIDASE"/>
    <property type="match status" value="1"/>
</dbReference>
<dbReference type="PANTHER" id="PTHR11592:SF78">
    <property type="entry name" value="GLUTATHIONE PEROXIDASE"/>
    <property type="match status" value="1"/>
</dbReference>
<dbReference type="Pfam" id="PF00255">
    <property type="entry name" value="GSHPx"/>
    <property type="match status" value="1"/>
</dbReference>
<dbReference type="PIRSF" id="PIRSF000303">
    <property type="entry name" value="Glutathion_perox"/>
    <property type="match status" value="1"/>
</dbReference>
<dbReference type="PRINTS" id="PR01011">
    <property type="entry name" value="GLUTPROXDASE"/>
</dbReference>
<dbReference type="SUPFAM" id="SSF52833">
    <property type="entry name" value="Thioredoxin-like"/>
    <property type="match status" value="1"/>
</dbReference>
<dbReference type="PROSITE" id="PS00460">
    <property type="entry name" value="GLUTATHIONE_PEROXID_1"/>
    <property type="match status" value="1"/>
</dbReference>
<dbReference type="PROSITE" id="PS00763">
    <property type="entry name" value="GLUTATHIONE_PEROXID_2"/>
    <property type="match status" value="1"/>
</dbReference>
<dbReference type="PROSITE" id="PS51355">
    <property type="entry name" value="GLUTATHIONE_PEROXID_3"/>
    <property type="match status" value="1"/>
</dbReference>
<sequence>MADESPKSIYDFTVKDIGGNDVSLDQYKGKTLLVVNVASKCGLTDANYKELNVLYEKYKEQGLEILAFPCNQFLGQEPGNNEEIQQTVCTRFKAEFPIFDKVDVNGKNTAPLYKYLKAEKGGLLIDAIKWNFTKFLVSPDGKVLQRYSPRTSPLQFEKDIQTALGQASS</sequence>
<keyword id="KW-0963">Cytoplasm</keyword>
<keyword id="KW-0539">Nucleus</keyword>
<keyword id="KW-0560">Oxidoreductase</keyword>
<keyword id="KW-0575">Peroxidase</keyword>
<keyword id="KW-1185">Reference proteome</keyword>
<keyword id="KW-0346">Stress response</keyword>
<name>GPX2_ARATH</name>
<feature type="chain" id="PRO_0000066637" description="Probable glutathione peroxidase 2">
    <location>
        <begin position="1"/>
        <end position="169"/>
    </location>
</feature>
<feature type="active site" evidence="1">
    <location>
        <position position="41"/>
    </location>
</feature>
<proteinExistence type="evidence at protein level"/>
<gene>
    <name type="primary">GPX2</name>
    <name type="ordered locus">At2g31570</name>
    <name type="ORF">T9H9.9</name>
</gene>
<comment type="function">
    <text evidence="1">May constitute a glutathione peroxidase-like protective system against oxidative stresses.</text>
</comment>
<comment type="catalytic activity">
    <reaction>
        <text>2 glutathione + H2O2 = glutathione disulfide + 2 H2O</text>
        <dbReference type="Rhea" id="RHEA:16833"/>
        <dbReference type="ChEBI" id="CHEBI:15377"/>
        <dbReference type="ChEBI" id="CHEBI:16240"/>
        <dbReference type="ChEBI" id="CHEBI:57925"/>
        <dbReference type="ChEBI" id="CHEBI:58297"/>
        <dbReference type="EC" id="1.11.1.9"/>
    </reaction>
</comment>
<comment type="subunit">
    <text evidence="3">Interacts with DJ1A.</text>
</comment>
<comment type="subcellular location">
    <subcellularLocation>
        <location evidence="3">Cytoplasm</location>
        <location evidence="3">Cytosol</location>
    </subcellularLocation>
    <subcellularLocation>
        <location evidence="3">Nucleus</location>
    </subcellularLocation>
</comment>
<comment type="tissue specificity">
    <text evidence="2">Expressed in leaves, stems, flowers, green siliques and roots.</text>
</comment>
<comment type="induction">
    <text evidence="2">By salt stress and metals. Up-regulated by salicylic acid (SA).</text>
</comment>
<comment type="similarity">
    <text evidence="4">Belongs to the glutathione peroxidase family.</text>
</comment>